<protein>
    <recommendedName>
        <fullName>Head completion protein gp6</fullName>
    </recommendedName>
    <alternativeName>
        <fullName>Connector protein gp6</fullName>
    </alternativeName>
    <alternativeName>
        <fullName>Gene product 6</fullName>
        <shortName>Gp6</shortName>
    </alternativeName>
</protein>
<evidence type="ECO:0000250" key="1">
    <source>
        <dbReference type="UniProtKB" id="Q38584"/>
    </source>
</evidence>
<evidence type="ECO:0000269" key="2">
    <source>
    </source>
</evidence>
<evidence type="ECO:0000305" key="3"/>
<evidence type="ECO:0007744" key="4">
    <source>
        <dbReference type="PDB" id="3JVO"/>
    </source>
</evidence>
<name>GP6_BPHK7</name>
<gene>
    <name type="primary">6</name>
</gene>
<sequence length="108" mass="12408">MAIDVLDVISLSLFKQQIEFEEDDRDELITLYAQAAFDYCMRWCDEPAWKVAADIPAAVKGAVLLVFADMFEHRTAQSEVQLYENAAAERMMFIHRNWRGKAESEEGS</sequence>
<comment type="function">
    <text evidence="2">Head completion protein that exhibits an open central channel for viral DNA ejection (PubMed:19895817). Part of the head-tail connector by binding to the portal protein and to the head completion protein gp7 (PubMed:19895817).</text>
</comment>
<comment type="subunit">
    <text evidence="1 2">Homotridecamer (PubMed:19895817). Interacts with the stopper protein gp7. Interacts with the portal protein; this interaction occurs at the end of the packaging when the terminase complex is replaced by the connector (By similarity).</text>
</comment>
<comment type="subcellular location">
    <subcellularLocation>
        <location evidence="2">Virion</location>
    </subcellularLocation>
    <text evidence="1">Part of the connector between the portal and the tail.</text>
</comment>
<comment type="similarity">
    <text evidence="3">Belongs to the Caudoviricetes gp6/gp15 head completion protein family.</text>
</comment>
<keyword id="KW-0002">3D-structure</keyword>
<keyword id="KW-1185">Reference proteome</keyword>
<keyword id="KW-1171">Viral genome ejection through host cell envelope</keyword>
<keyword id="KW-1243">Viral long flexible tail ejection system</keyword>
<keyword id="KW-1162">Viral penetration into host cytoplasm</keyword>
<keyword id="KW-0946">Virion</keyword>
<keyword id="KW-1160">Virus entry into host cell</keyword>
<organismHost>
    <name type="scientific">Escherichia coli</name>
    <dbReference type="NCBI Taxonomy" id="562"/>
</organismHost>
<reference key="1">
    <citation type="journal article" date="2000" name="J. Mol. Biol.">
        <title>Genomic sequences of bacteriophages HK97 and HK022: pervasive genetic mosaicism in the lambdoid bacteriophages.</title>
        <authorList>
            <person name="Juhala R.J."/>
            <person name="Ford M.E."/>
            <person name="Duda R.L."/>
            <person name="Youlton A."/>
            <person name="Hatfull G.F."/>
            <person name="Hendrix R.W."/>
        </authorList>
    </citation>
    <scope>NUCLEOTIDE SEQUENCE [GENOMIC DNA]</scope>
</reference>
<reference evidence="4" key="2">
    <citation type="journal article" date="2010" name="J. Mol. Biol.">
        <title>The crystal structure of bacteriophage HK97 gp6: defining a large family of head-tail connector proteins.</title>
        <authorList>
            <person name="Cardarelli L."/>
            <person name="Lam R."/>
            <person name="Tuite A."/>
            <person name="Baker L.A."/>
            <person name="Sadowski P.D."/>
            <person name="Radford D.R."/>
            <person name="Rubinstein J.L."/>
            <person name="Battaile K.P."/>
            <person name="Chirgadze N."/>
            <person name="Maxwell K.L."/>
            <person name="Davidson A.R."/>
        </authorList>
    </citation>
    <scope>X-RAY CRYSTALLOGRAPHY (2.10 ANGSTROMS)</scope>
    <scope>FUNCTION</scope>
    <scope>SUBCELLULAR LOCATION</scope>
</reference>
<dbReference type="EMBL" id="AF069529">
    <property type="protein sequence ID" value="AAF31099.1"/>
    <property type="molecule type" value="Genomic_DNA"/>
</dbReference>
<dbReference type="RefSeq" id="NP_037702.1">
    <property type="nucleotide sequence ID" value="NC_002167.1"/>
</dbReference>
<dbReference type="PDB" id="3JVO">
    <property type="method" value="X-ray"/>
    <property type="resolution" value="2.10 A"/>
    <property type="chains" value="A/B/C/D/E/F/G/H/I/J/K/L/M=1-108"/>
</dbReference>
<dbReference type="PDBsum" id="3JVO"/>
<dbReference type="SMR" id="Q9MBY2"/>
<dbReference type="GeneID" id="1262532"/>
<dbReference type="KEGG" id="vg:1262532"/>
<dbReference type="EvolutionaryTrace" id="Q9MBY2"/>
<dbReference type="Proteomes" id="UP000002576">
    <property type="component" value="Genome"/>
</dbReference>
<dbReference type="CDD" id="cd08051">
    <property type="entry name" value="gp6_gp15_like"/>
    <property type="match status" value="1"/>
</dbReference>
<dbReference type="Gene3D" id="1.10.3230.30">
    <property type="entry name" value="Phage gp6-like head-tail connector protein"/>
    <property type="match status" value="1"/>
</dbReference>
<dbReference type="InterPro" id="IPR047186">
    <property type="entry name" value="Gp6_gp15-like"/>
</dbReference>
<dbReference type="InterPro" id="IPR021146">
    <property type="entry name" value="Phage_gp6-like_head-tail"/>
</dbReference>
<dbReference type="InterPro" id="IPR006450">
    <property type="entry name" value="Phage_HK97_gp6-like"/>
</dbReference>
<dbReference type="NCBIfam" id="TIGR01560">
    <property type="entry name" value="put_DNA_pack"/>
    <property type="match status" value="1"/>
</dbReference>
<dbReference type="Pfam" id="PF05135">
    <property type="entry name" value="Phage_connect_1"/>
    <property type="match status" value="1"/>
</dbReference>
<feature type="chain" id="PRO_0000462346" description="Head completion protein gp6">
    <location>
        <begin position="1"/>
        <end position="108"/>
    </location>
</feature>
<accession>Q9MBY2</accession>
<proteinExistence type="evidence at protein level"/>
<organism>
    <name type="scientific">Enterobacteria phage HK97</name>
    <name type="common">Bacteriophage HK97</name>
    <dbReference type="NCBI Taxonomy" id="2681617"/>
    <lineage>
        <taxon>Viruses</taxon>
        <taxon>Duplodnaviria</taxon>
        <taxon>Heunggongvirae</taxon>
        <taxon>Uroviricota</taxon>
        <taxon>Caudoviricetes</taxon>
        <taxon>Hendrixvirinae</taxon>
        <taxon>Byrnievirus</taxon>
        <taxon>Byrnievirus HK97</taxon>
    </lineage>
</organism>